<sequence>MGKRKSKRKAPTKAKAVMPLDTQFNCPFCNHERVCEVKMDREKNVGYISCRVCSEDFQTNINYLSEPIDVYSDWVDACEQANNA</sequence>
<name>ELOF1_CAEEL</name>
<gene>
    <name evidence="4" type="primary">elof-1</name>
    <name evidence="4" type="ORF">Y54G11A.11</name>
</gene>
<protein>
    <recommendedName>
        <fullName>Transcription elongation factor 1 homolog</fullName>
    </recommendedName>
</protein>
<keyword id="KW-0479">Metal-binding</keyword>
<keyword id="KW-0539">Nucleus</keyword>
<keyword id="KW-1185">Reference proteome</keyword>
<keyword id="KW-0804">Transcription</keyword>
<keyword id="KW-0805">Transcription regulation</keyword>
<keyword id="KW-0862">Zinc</keyword>
<keyword id="KW-0863">Zinc-finger</keyword>
<dbReference type="EMBL" id="AL034488">
    <property type="protein sequence ID" value="CAA22454.1"/>
    <property type="molecule type" value="Genomic_DNA"/>
</dbReference>
<dbReference type="PIR" id="T27174">
    <property type="entry name" value="T27174"/>
</dbReference>
<dbReference type="RefSeq" id="NP_496983.1">
    <property type="nucleotide sequence ID" value="NM_064582.10"/>
</dbReference>
<dbReference type="SMR" id="Q9XVZ8"/>
<dbReference type="BioGRID" id="40371">
    <property type="interactions" value="1"/>
</dbReference>
<dbReference type="DIP" id="DIP-27150N"/>
<dbReference type="FunCoup" id="Q9XVZ8">
    <property type="interactions" value="2534"/>
</dbReference>
<dbReference type="STRING" id="6239.Y54G11A.11.2"/>
<dbReference type="PaxDb" id="6239-Y54G11A.11.2"/>
<dbReference type="PeptideAtlas" id="Q9XVZ8"/>
<dbReference type="EnsemblMetazoa" id="Y54G11A.11.1">
    <property type="protein sequence ID" value="Y54G11A.11.1"/>
    <property type="gene ID" value="WBGene00013219"/>
</dbReference>
<dbReference type="EnsemblMetazoa" id="Y54G11A.11.2">
    <property type="protein sequence ID" value="Y54G11A.11.2"/>
    <property type="gene ID" value="WBGene00013219"/>
</dbReference>
<dbReference type="GeneID" id="175090"/>
<dbReference type="KEGG" id="cel:CELE_Y54G11A.11"/>
<dbReference type="UCSC" id="Y54G11A.11.1">
    <property type="organism name" value="c. elegans"/>
</dbReference>
<dbReference type="AGR" id="WB:WBGene00013219"/>
<dbReference type="CTD" id="175090"/>
<dbReference type="WormBase" id="Y54G11A.11">
    <property type="protein sequence ID" value="CE22483"/>
    <property type="gene ID" value="WBGene00013219"/>
    <property type="gene designation" value="elof-1"/>
</dbReference>
<dbReference type="eggNOG" id="KOG3214">
    <property type="taxonomic scope" value="Eukaryota"/>
</dbReference>
<dbReference type="GeneTree" id="ENSGT00390000000053"/>
<dbReference type="HOGENOM" id="CLU_105983_2_0_1"/>
<dbReference type="InParanoid" id="Q9XVZ8"/>
<dbReference type="OMA" id="CLDANKK"/>
<dbReference type="OrthoDB" id="445983at2759"/>
<dbReference type="PhylomeDB" id="Q9XVZ8"/>
<dbReference type="PRO" id="PR:Q9XVZ8"/>
<dbReference type="Proteomes" id="UP000001940">
    <property type="component" value="Chromosome II"/>
</dbReference>
<dbReference type="Bgee" id="WBGene00013219">
    <property type="expression patterns" value="Expressed in embryo and 4 other cell types or tissues"/>
</dbReference>
<dbReference type="GO" id="GO:0005730">
    <property type="term" value="C:nucleolus"/>
    <property type="evidence" value="ECO:0007005"/>
    <property type="project" value="WormBase"/>
</dbReference>
<dbReference type="GO" id="GO:0008023">
    <property type="term" value="C:transcription elongation factor complex"/>
    <property type="evidence" value="ECO:0000318"/>
    <property type="project" value="GO_Central"/>
</dbReference>
<dbReference type="GO" id="GO:0000993">
    <property type="term" value="F:RNA polymerase II complex binding"/>
    <property type="evidence" value="ECO:0000318"/>
    <property type="project" value="GO_Central"/>
</dbReference>
<dbReference type="GO" id="GO:0008270">
    <property type="term" value="F:zinc ion binding"/>
    <property type="evidence" value="ECO:0007669"/>
    <property type="project" value="UniProtKB-KW"/>
</dbReference>
<dbReference type="GO" id="GO:0006368">
    <property type="term" value="P:transcription elongation by RNA polymerase II"/>
    <property type="evidence" value="ECO:0000318"/>
    <property type="project" value="GO_Central"/>
</dbReference>
<dbReference type="FunFam" id="2.20.25.190:FF:000002">
    <property type="entry name" value="Transcription elongation factor 1 homolog"/>
    <property type="match status" value="1"/>
</dbReference>
<dbReference type="Gene3D" id="2.20.25.190">
    <property type="match status" value="1"/>
</dbReference>
<dbReference type="InterPro" id="IPR007808">
    <property type="entry name" value="Elf1"/>
</dbReference>
<dbReference type="InterPro" id="IPR038567">
    <property type="entry name" value="T_Elf1_sf"/>
</dbReference>
<dbReference type="PANTHER" id="PTHR20934">
    <property type="entry name" value="TRANSCRIPTION ELONGATION FACTOR 1 HOMOLOG"/>
    <property type="match status" value="1"/>
</dbReference>
<dbReference type="PANTHER" id="PTHR20934:SF0">
    <property type="entry name" value="TRANSCRIPTION ELONGATION FACTOR 1 HOMOLOG"/>
    <property type="match status" value="1"/>
</dbReference>
<dbReference type="Pfam" id="PF05129">
    <property type="entry name" value="Zn_ribbon_Elf1"/>
    <property type="match status" value="1"/>
</dbReference>
<dbReference type="SUPFAM" id="SSF57783">
    <property type="entry name" value="Zinc beta-ribbon"/>
    <property type="match status" value="1"/>
</dbReference>
<feature type="chain" id="PRO_0000120943" description="Transcription elongation factor 1 homolog">
    <location>
        <begin position="1"/>
        <end position="84"/>
    </location>
</feature>
<feature type="binding site" evidence="2">
    <location>
        <position position="26"/>
    </location>
    <ligand>
        <name>Zn(2+)</name>
        <dbReference type="ChEBI" id="CHEBI:29105"/>
    </ligand>
</feature>
<feature type="binding site" evidence="2">
    <location>
        <position position="29"/>
    </location>
    <ligand>
        <name>Zn(2+)</name>
        <dbReference type="ChEBI" id="CHEBI:29105"/>
    </ligand>
</feature>
<feature type="binding site" evidence="2">
    <location>
        <position position="50"/>
    </location>
    <ligand>
        <name>Zn(2+)</name>
        <dbReference type="ChEBI" id="CHEBI:29105"/>
    </ligand>
</feature>
<feature type="binding site" evidence="2">
    <location>
        <position position="53"/>
    </location>
    <ligand>
        <name>Zn(2+)</name>
        <dbReference type="ChEBI" id="CHEBI:29105"/>
    </ligand>
</feature>
<accession>Q9XVZ8</accession>
<organism>
    <name type="scientific">Caenorhabditis elegans</name>
    <dbReference type="NCBI Taxonomy" id="6239"/>
    <lineage>
        <taxon>Eukaryota</taxon>
        <taxon>Metazoa</taxon>
        <taxon>Ecdysozoa</taxon>
        <taxon>Nematoda</taxon>
        <taxon>Chromadorea</taxon>
        <taxon>Rhabditida</taxon>
        <taxon>Rhabditina</taxon>
        <taxon>Rhabditomorpha</taxon>
        <taxon>Rhabditoidea</taxon>
        <taxon>Rhabditidae</taxon>
        <taxon>Peloderinae</taxon>
        <taxon>Caenorhabditis</taxon>
    </lineage>
</organism>
<comment type="function">
    <text evidence="1">Transcription elongation factor implicated in the maintenance of proper chromatin structure in actively transcribed regions.</text>
</comment>
<comment type="subcellular location">
    <subcellularLocation>
        <location evidence="1">Nucleus</location>
    </subcellularLocation>
</comment>
<comment type="similarity">
    <text evidence="3">Belongs to the ELOF1 family.</text>
</comment>
<reference key="1">
    <citation type="journal article" date="1998" name="Science">
        <title>Genome sequence of the nematode C. elegans: a platform for investigating biology.</title>
        <authorList>
            <consortium name="The C. elegans sequencing consortium"/>
        </authorList>
    </citation>
    <scope>NUCLEOTIDE SEQUENCE [LARGE SCALE GENOMIC DNA]</scope>
    <source>
        <strain>Bristol N2</strain>
    </source>
</reference>
<evidence type="ECO:0000250" key="1"/>
<evidence type="ECO:0000250" key="2">
    <source>
        <dbReference type="UniProtKB" id="P60003"/>
    </source>
</evidence>
<evidence type="ECO:0000305" key="3"/>
<evidence type="ECO:0000312" key="4">
    <source>
        <dbReference type="WormBase" id="Y54G11A.11"/>
    </source>
</evidence>
<proteinExistence type="inferred from homology"/>